<comment type="function">
    <text evidence="1">Transports viral genome to neighboring plant cells directly through plasmosdesmata, without any budding. The movement protein allows efficient cell to cell propagation, by bypassing the host cell wall barrier. Begomovirus genome is shuttled out of nucleus by Nuclear shuttle protein (NSP) and the movement protein transports the DNA-NSP complex to cell plasmodesmata and facilitates further movement across the cell wall (By similarity).</text>
</comment>
<comment type="subunit">
    <text evidence="1">Binds to dimeric supercoiled plasmid DNA.</text>
</comment>
<comment type="subcellular location">
    <subcellularLocation>
        <location evidence="1">Host cell membrane</location>
        <topology evidence="1">Peripheral membrane protein</topology>
        <orientation evidence="1">Cytoplasmic side</orientation>
    </subcellularLocation>
    <subcellularLocation>
        <location evidence="1">Host microsome membrane</location>
        <topology evidence="1">Peripheral membrane protein</topology>
        <orientation evidence="1">Cytoplasmic side</orientation>
    </subcellularLocation>
    <subcellularLocation>
        <location evidence="1">Host endoplasmic reticulum membrane</location>
        <topology evidence="1">Peripheral membrane protein</topology>
        <orientation evidence="1">Cytoplasmic side</orientation>
    </subcellularLocation>
    <text evidence="1">Found on ER-derived vesicles.</text>
</comment>
<comment type="PTM">
    <text evidence="1">Phosphorylated.</text>
</comment>
<comment type="similarity">
    <text evidence="2">Belongs to the begomovirus movement protein BC1 family.</text>
</comment>
<organismHost>
    <name type="scientific">Macroptilium lathyroides</name>
    <dbReference type="NCBI Taxonomy" id="260885"/>
</organismHost>
<organismHost>
    <name type="scientific">Malvastrum coromandelianum</name>
    <dbReference type="NCBI Taxonomy" id="108453"/>
</organismHost>
<organismHost>
    <name type="scientific">Phaseolus lunatus</name>
    <name type="common">Lima bean</name>
    <name type="synonym">Phaseolus limensis</name>
    <dbReference type="NCBI Taxonomy" id="3884"/>
</organismHost>
<organismHost>
    <name type="scientific">Phaseolus vulgaris</name>
    <name type="common">Kidney bean</name>
    <name type="synonym">French bean</name>
    <dbReference type="NCBI Taxonomy" id="3885"/>
</organismHost>
<proteinExistence type="inferred from homology"/>
<feature type="chain" id="PRO_0000222252" description="Movement protein BC1">
    <location>
        <begin position="1"/>
        <end position="293"/>
    </location>
</feature>
<protein>
    <recommendedName>
        <fullName>Movement protein BC1</fullName>
    </recommendedName>
    <alternativeName>
        <fullName>Movement protein BL1</fullName>
    </alternativeName>
</protein>
<organism>
    <name type="scientific">Bean golden yellow mosaic virus (isolate Puerto Rico)</name>
    <name type="common">BGYMV</name>
    <name type="synonym">Bean golden mosaic virus (isolate Puerto Rico)</name>
    <dbReference type="NCBI Taxonomy" id="222448"/>
    <lineage>
        <taxon>Viruses</taxon>
        <taxon>Monodnaviria</taxon>
        <taxon>Shotokuvirae</taxon>
        <taxon>Cressdnaviricota</taxon>
        <taxon>Repensiviricetes</taxon>
        <taxon>Geplafuvirales</taxon>
        <taxon>Geminiviridae</taxon>
        <taxon>Begomovirus</taxon>
        <taxon>Bean golden yellow mosaic virus</taxon>
    </lineage>
</organism>
<dbReference type="EMBL" id="M10080">
    <property type="protein sequence ID" value="AAA46323.1"/>
    <property type="molecule type" value="Genomic_DNA"/>
</dbReference>
<dbReference type="Proteomes" id="UP000006572">
    <property type="component" value="Genome"/>
</dbReference>
<dbReference type="GO" id="GO:0044167">
    <property type="term" value="C:host cell endoplasmic reticulum membrane"/>
    <property type="evidence" value="ECO:0007669"/>
    <property type="project" value="UniProtKB-SubCell"/>
</dbReference>
<dbReference type="GO" id="GO:0020002">
    <property type="term" value="C:host cell plasma membrane"/>
    <property type="evidence" value="ECO:0007669"/>
    <property type="project" value="UniProtKB-SubCell"/>
</dbReference>
<dbReference type="GO" id="GO:0016020">
    <property type="term" value="C:membrane"/>
    <property type="evidence" value="ECO:0007669"/>
    <property type="project" value="UniProtKB-KW"/>
</dbReference>
<dbReference type="GO" id="GO:0003677">
    <property type="term" value="F:DNA binding"/>
    <property type="evidence" value="ECO:0007669"/>
    <property type="project" value="UniProtKB-KW"/>
</dbReference>
<dbReference type="GO" id="GO:0039675">
    <property type="term" value="P:exit of virus from host cell nucleus through nuclear pore"/>
    <property type="evidence" value="ECO:0000314"/>
    <property type="project" value="UniProtKB"/>
</dbReference>
<dbReference type="GO" id="GO:0046740">
    <property type="term" value="P:transport of virus in host, cell to cell"/>
    <property type="evidence" value="ECO:0007669"/>
    <property type="project" value="UniProtKB-KW"/>
</dbReference>
<dbReference type="InterPro" id="IPR000211">
    <property type="entry name" value="Gemini_BL"/>
</dbReference>
<dbReference type="Pfam" id="PF00845">
    <property type="entry name" value="Gemini_BL1"/>
    <property type="match status" value="1"/>
</dbReference>
<keyword id="KW-0238">DNA-binding</keyword>
<keyword id="KW-1032">Host cell membrane</keyword>
<keyword id="KW-1038">Host endoplasmic reticulum</keyword>
<keyword id="KW-1043">Host membrane</keyword>
<keyword id="KW-1044">Host microsome</keyword>
<keyword id="KW-0472">Membrane</keyword>
<keyword id="KW-0597">Phosphoprotein</keyword>
<keyword id="KW-1185">Reference proteome</keyword>
<keyword id="KW-0813">Transport</keyword>
<keyword id="KW-0916">Viral movement protein</keyword>
<gene>
    <name type="ORF">BC1</name>
    <name type="ORF">BL1</name>
</gene>
<accession>P0CK43</accession>
<accession>P06001</accession>
<accession>Q67573</accession>
<reference key="1">
    <citation type="journal article" date="1985" name="Proc. Natl. Acad. Sci. U.S.A.">
        <title>Nucleotide sequence of bean golden mosaic virus and a model for gene regulation in geminiviruses.</title>
        <authorList>
            <person name="Howarth A.J."/>
            <person name="Caton J."/>
            <person name="Bossert M."/>
            <person name="Goodman R.M."/>
        </authorList>
    </citation>
    <scope>NUCLEOTIDE SEQUENCE [GENOMIC DNA]</scope>
</reference>
<sequence>MDSQLANPPNAFNYIESQRDEYQLSHDLTEIILQFPSTASQLSARFSRSCMKIDHCVIEYRQQVPINATGSVVVEIHDKRMTDNESLQASWTFPIRCNIDLHYFSSSFFSLKDPIPWKLYYRVSDTNVHQRTHFAKFKGKLKLSTAKHSVDIPFRAPTVKILSKQFSNKDIDFSHVDYGKWERKLIRSASLSKYGLQGPIELKPGESWASKSTIGVSHLDADSDLDSAIHPYKNLNRLGSSVLDPGDSASIIGAQRAQSNITLSIAQLNEIVRSTVNECINNNCIHVQPKSLK</sequence>
<evidence type="ECO:0000250" key="1"/>
<evidence type="ECO:0000305" key="2"/>
<name>MVP_BGYMV</name>